<feature type="chain" id="PRO_0000079253" description="NADPH-dependent 3-demethoxyubiquinone 3-hydroxylase, mitochondrial">
    <location>
        <begin position="1"/>
        <end position="217"/>
    </location>
</feature>
<feature type="repeat" description="1">
    <location>
        <begin position="48"/>
        <end position="129"/>
    </location>
</feature>
<feature type="repeat" description="2">
    <location>
        <begin position="130"/>
        <end position="217"/>
    </location>
</feature>
<feature type="region of interest" description="2 X approximate tandem repeats">
    <location>
        <begin position="48"/>
        <end position="217"/>
    </location>
</feature>
<feature type="binding site" evidence="2">
    <location>
        <position position="60"/>
    </location>
    <ligand>
        <name>Fe cation</name>
        <dbReference type="ChEBI" id="CHEBI:24875"/>
        <label>1</label>
    </ligand>
</feature>
<feature type="binding site" evidence="2">
    <location>
        <position position="90"/>
    </location>
    <ligand>
        <name>Fe cation</name>
        <dbReference type="ChEBI" id="CHEBI:24875"/>
        <label>1</label>
    </ligand>
</feature>
<feature type="binding site" evidence="2">
    <location>
        <position position="90"/>
    </location>
    <ligand>
        <name>Fe cation</name>
        <dbReference type="ChEBI" id="CHEBI:24875"/>
        <label>2</label>
    </ligand>
</feature>
<feature type="binding site" evidence="2">
    <location>
        <position position="93"/>
    </location>
    <ligand>
        <name>Fe cation</name>
        <dbReference type="ChEBI" id="CHEBI:24875"/>
        <label>1</label>
    </ligand>
</feature>
<feature type="binding site" evidence="2">
    <location>
        <position position="142"/>
    </location>
    <ligand>
        <name>Fe cation</name>
        <dbReference type="ChEBI" id="CHEBI:24875"/>
        <label>2</label>
    </ligand>
</feature>
<feature type="binding site" evidence="2">
    <location>
        <position position="178"/>
    </location>
    <ligand>
        <name>Fe cation</name>
        <dbReference type="ChEBI" id="CHEBI:24875"/>
        <label>1</label>
    </ligand>
</feature>
<feature type="binding site" evidence="2">
    <location>
        <position position="178"/>
    </location>
    <ligand>
        <name>Fe cation</name>
        <dbReference type="ChEBI" id="CHEBI:24875"/>
        <label>2</label>
    </ligand>
</feature>
<feature type="binding site" evidence="2">
    <location>
        <position position="181"/>
    </location>
    <ligand>
        <name>Fe cation</name>
        <dbReference type="ChEBI" id="CHEBI:24875"/>
        <label>2</label>
    </ligand>
</feature>
<feature type="binding site" evidence="1">
    <location>
        <position position="212"/>
    </location>
    <ligand>
        <name>NADH</name>
        <dbReference type="ChEBI" id="CHEBI:57945"/>
    </ligand>
</feature>
<feature type="binding site" evidence="1">
    <location>
        <position position="216"/>
    </location>
    <ligand>
        <name>NADH</name>
        <dbReference type="ChEBI" id="CHEBI:57945"/>
    </ligand>
</feature>
<name>COQ7_RAT</name>
<dbReference type="EC" id="1.14.13.253" evidence="2"/>
<dbReference type="EMBL" id="AABR07005572">
    <property type="status" value="NOT_ANNOTATED_CDS"/>
    <property type="molecule type" value="Genomic_DNA"/>
</dbReference>
<dbReference type="EMBL" id="CH473956">
    <property type="protein sequence ID" value="EDM17705.1"/>
    <property type="molecule type" value="Genomic_DNA"/>
</dbReference>
<dbReference type="EMBL" id="U46149">
    <property type="protein sequence ID" value="AAB51656.1"/>
    <property type="molecule type" value="mRNA"/>
</dbReference>
<dbReference type="PIR" id="T10806">
    <property type="entry name" value="T10806"/>
</dbReference>
<dbReference type="RefSeq" id="NP_036917.2">
    <property type="nucleotide sequence ID" value="NM_012785.3"/>
</dbReference>
<dbReference type="SMR" id="Q63619"/>
<dbReference type="FunCoup" id="Q63619">
    <property type="interactions" value="1161"/>
</dbReference>
<dbReference type="STRING" id="10116.ENSRNOP00000022988"/>
<dbReference type="iPTMnet" id="Q63619"/>
<dbReference type="PhosphoSitePlus" id="Q63619"/>
<dbReference type="PaxDb" id="10116-ENSRNOP00000022988"/>
<dbReference type="PeptideAtlas" id="Q63619"/>
<dbReference type="Ensembl" id="ENSRNOT00000022988.6">
    <property type="protein sequence ID" value="ENSRNOP00000022988.6"/>
    <property type="gene ID" value="ENSRNOG00000017012.6"/>
</dbReference>
<dbReference type="GeneID" id="25249"/>
<dbReference type="KEGG" id="rno:25249"/>
<dbReference type="AGR" id="RGD:2381"/>
<dbReference type="CTD" id="10229"/>
<dbReference type="RGD" id="2381">
    <property type="gene designation" value="Coq7"/>
</dbReference>
<dbReference type="VEuPathDB" id="HostDB:ENSRNOG00000017012"/>
<dbReference type="eggNOG" id="KOG4061">
    <property type="taxonomic scope" value="Eukaryota"/>
</dbReference>
<dbReference type="GeneTree" id="ENSGT00390000014520"/>
<dbReference type="HOGENOM" id="CLU_071892_2_0_1"/>
<dbReference type="InParanoid" id="Q63619"/>
<dbReference type="OMA" id="WSTAVMG"/>
<dbReference type="PhylomeDB" id="Q63619"/>
<dbReference type="TreeFam" id="TF314559"/>
<dbReference type="BRENDA" id="1.14.99.60">
    <property type="organism ID" value="5301"/>
</dbReference>
<dbReference type="Reactome" id="R-RNO-2142789">
    <property type="pathway name" value="Ubiquinol biosynthesis"/>
</dbReference>
<dbReference type="UniPathway" id="UPA00232"/>
<dbReference type="Proteomes" id="UP000002494">
    <property type="component" value="Chromosome 1"/>
</dbReference>
<dbReference type="Proteomes" id="UP000234681">
    <property type="component" value="Chromosome 1"/>
</dbReference>
<dbReference type="Bgee" id="ENSRNOG00000017012">
    <property type="expression patterns" value="Expressed in heart and 20 other cell types or tissues"/>
</dbReference>
<dbReference type="ExpressionAtlas" id="Q63619">
    <property type="expression patterns" value="baseline and differential"/>
</dbReference>
<dbReference type="GO" id="GO:0031314">
    <property type="term" value="C:extrinsic component of mitochondrial inner membrane"/>
    <property type="evidence" value="ECO:0007669"/>
    <property type="project" value="UniProtKB-UniRule"/>
</dbReference>
<dbReference type="GO" id="GO:0005743">
    <property type="term" value="C:mitochondrial inner membrane"/>
    <property type="evidence" value="ECO:0000266"/>
    <property type="project" value="RGD"/>
</dbReference>
<dbReference type="GO" id="GO:0005634">
    <property type="term" value="C:nucleus"/>
    <property type="evidence" value="ECO:0007669"/>
    <property type="project" value="Ensembl"/>
</dbReference>
<dbReference type="GO" id="GO:0110142">
    <property type="term" value="C:ubiquinone biosynthesis complex"/>
    <property type="evidence" value="ECO:0007669"/>
    <property type="project" value="Ensembl"/>
</dbReference>
<dbReference type="GO" id="GO:0008682">
    <property type="term" value="F:3-demethoxyubiquinol 3-hydroxylase activity"/>
    <property type="evidence" value="ECO:0007669"/>
    <property type="project" value="UniProtKB-EC"/>
</dbReference>
<dbReference type="GO" id="GO:0160224">
    <property type="term" value="F:3-demethoxyubiquinone 3-hydroxylase (NADH) activity"/>
    <property type="evidence" value="ECO:0007669"/>
    <property type="project" value="Ensembl"/>
</dbReference>
<dbReference type="GO" id="GO:0046872">
    <property type="term" value="F:metal ion binding"/>
    <property type="evidence" value="ECO:0007669"/>
    <property type="project" value="UniProtKB-KW"/>
</dbReference>
<dbReference type="GO" id="GO:0034599">
    <property type="term" value="P:cellular response to oxidative stress"/>
    <property type="evidence" value="ECO:0000266"/>
    <property type="project" value="RGD"/>
</dbReference>
<dbReference type="GO" id="GO:0008340">
    <property type="term" value="P:determination of adult lifespan"/>
    <property type="evidence" value="ECO:0000266"/>
    <property type="project" value="RGD"/>
</dbReference>
<dbReference type="GO" id="GO:0001701">
    <property type="term" value="P:in utero embryonic development"/>
    <property type="evidence" value="ECO:0000266"/>
    <property type="project" value="RGD"/>
</dbReference>
<dbReference type="GO" id="GO:0042775">
    <property type="term" value="P:mitochondrial ATP synthesis coupled electron transport"/>
    <property type="evidence" value="ECO:0000266"/>
    <property type="project" value="RGD"/>
</dbReference>
<dbReference type="GO" id="GO:0007005">
    <property type="term" value="P:mitochondrion organization"/>
    <property type="evidence" value="ECO:0000266"/>
    <property type="project" value="RGD"/>
</dbReference>
<dbReference type="GO" id="GO:0001841">
    <property type="term" value="P:neural tube formation"/>
    <property type="evidence" value="ECO:0000266"/>
    <property type="project" value="RGD"/>
</dbReference>
<dbReference type="GO" id="GO:0022008">
    <property type="term" value="P:neurogenesis"/>
    <property type="evidence" value="ECO:0000266"/>
    <property type="project" value="RGD"/>
</dbReference>
<dbReference type="GO" id="GO:0010468">
    <property type="term" value="P:regulation of gene expression"/>
    <property type="evidence" value="ECO:0000318"/>
    <property type="project" value="GO_Central"/>
</dbReference>
<dbReference type="GO" id="GO:2000377">
    <property type="term" value="P:regulation of reactive oxygen species metabolic process"/>
    <property type="evidence" value="ECO:0000318"/>
    <property type="project" value="GO_Central"/>
</dbReference>
<dbReference type="GO" id="GO:0022904">
    <property type="term" value="P:respiratory electron transport chain"/>
    <property type="evidence" value="ECO:0000266"/>
    <property type="project" value="RGD"/>
</dbReference>
<dbReference type="GO" id="GO:0006979">
    <property type="term" value="P:response to oxidative stress"/>
    <property type="evidence" value="ECO:0000266"/>
    <property type="project" value="RGD"/>
</dbReference>
<dbReference type="GO" id="GO:0009410">
    <property type="term" value="P:response to xenobiotic stimulus"/>
    <property type="evidence" value="ECO:0000270"/>
    <property type="project" value="RGD"/>
</dbReference>
<dbReference type="GO" id="GO:0006744">
    <property type="term" value="P:ubiquinone biosynthetic process"/>
    <property type="evidence" value="ECO:0007669"/>
    <property type="project" value="UniProtKB-UniRule"/>
</dbReference>
<dbReference type="CDD" id="cd01042">
    <property type="entry name" value="DMQH"/>
    <property type="match status" value="1"/>
</dbReference>
<dbReference type="HAMAP" id="MF_01658">
    <property type="entry name" value="COQ7"/>
    <property type="match status" value="1"/>
</dbReference>
<dbReference type="InterPro" id="IPR009078">
    <property type="entry name" value="Ferritin-like_SF"/>
</dbReference>
<dbReference type="InterPro" id="IPR011566">
    <property type="entry name" value="Ubq_synth_Coq7"/>
</dbReference>
<dbReference type="PANTHER" id="PTHR11237:SF4">
    <property type="entry name" value="5-DEMETHOXYUBIQUINONE HYDROXYLASE, MITOCHONDRIAL"/>
    <property type="match status" value="1"/>
</dbReference>
<dbReference type="PANTHER" id="PTHR11237">
    <property type="entry name" value="COENZYME Q10 BIOSYNTHESIS PROTEIN 7"/>
    <property type="match status" value="1"/>
</dbReference>
<dbReference type="Pfam" id="PF03232">
    <property type="entry name" value="COQ7"/>
    <property type="match status" value="1"/>
</dbReference>
<dbReference type="SUPFAM" id="SSF47240">
    <property type="entry name" value="Ferritin-like"/>
    <property type="match status" value="1"/>
</dbReference>
<organism>
    <name type="scientific">Rattus norvegicus</name>
    <name type="common">Rat</name>
    <dbReference type="NCBI Taxonomy" id="10116"/>
    <lineage>
        <taxon>Eukaryota</taxon>
        <taxon>Metazoa</taxon>
        <taxon>Chordata</taxon>
        <taxon>Craniata</taxon>
        <taxon>Vertebrata</taxon>
        <taxon>Euteleostomi</taxon>
        <taxon>Mammalia</taxon>
        <taxon>Eutheria</taxon>
        <taxon>Euarchontoglires</taxon>
        <taxon>Glires</taxon>
        <taxon>Rodentia</taxon>
        <taxon>Myomorpha</taxon>
        <taxon>Muroidea</taxon>
        <taxon>Muridae</taxon>
        <taxon>Murinae</taxon>
        <taxon>Rattus</taxon>
    </lineage>
</organism>
<gene>
    <name evidence="2 3" type="primary">Coq7</name>
</gene>
<evidence type="ECO:0000250" key="1">
    <source>
        <dbReference type="UniProtKB" id="Q99807"/>
    </source>
</evidence>
<evidence type="ECO:0000255" key="2">
    <source>
        <dbReference type="HAMAP-Rule" id="MF_03194"/>
    </source>
</evidence>
<evidence type="ECO:0000312" key="3">
    <source>
        <dbReference type="RGD" id="2381"/>
    </source>
</evidence>
<protein>
    <recommendedName>
        <fullName evidence="2">NADPH-dependent 3-demethoxyubiquinone 3-hydroxylase, mitochondrial</fullName>
        <ecNumber evidence="2">1.14.13.253</ecNumber>
    </recommendedName>
    <alternativeName>
        <fullName evidence="2">3-demethoxyubiquinone 3-hydroxylase (NADH)</fullName>
    </alternativeName>
    <alternativeName>
        <fullName evidence="2">Timing protein clk-1 homolog</fullName>
    </alternativeName>
    <alternativeName>
        <fullName evidence="2">Ubiquinone biosynthesis monooxygenase COQ7</fullName>
    </alternativeName>
</protein>
<keyword id="KW-0408">Iron</keyword>
<keyword id="KW-0472">Membrane</keyword>
<keyword id="KW-0479">Metal-binding</keyword>
<keyword id="KW-0496">Mitochondrion</keyword>
<keyword id="KW-0999">Mitochondrion inner membrane</keyword>
<keyword id="KW-0503">Monooxygenase</keyword>
<keyword id="KW-0520">NAD</keyword>
<keyword id="KW-0560">Oxidoreductase</keyword>
<keyword id="KW-1185">Reference proteome</keyword>
<keyword id="KW-0677">Repeat</keyword>
<keyword id="KW-0831">Ubiquinone biosynthesis</keyword>
<sequence>MSGAGAIAAASVGCLRTGVPRPFSAYGRGLIIRCHSTGMTLDNINRAAVDQIIRVDHAGEYGANRIYAGQMAVLGRTSVGPVIQKMWDQEKNHLKKFNELMVAFRVRPTVLMPLWNVAGFALGAGTALLGKEGAMACTVAVEESIAHHYNNQIRMLMEEDAEKYEELLQVIKQFRDEELEHHDTGLEHDAELAPAYTLLKRLIQAGCSAAIYLSERF</sequence>
<comment type="function">
    <text evidence="1 2">Catalyzes the hydroxylation of the 5-methoxy-2-methyl-3-(all-trans-polyprenyl)benzoquinone at the C6 position and participates in the biosynthesis of ubiquinone. Catalyzes the reaction through a substrate-mediated reduction pathway, whereby NADH shuttles electrons to 5-methoxy-2-methyl-3-(all-trans-decaprenyl)benzoquinone, which then transfers the electrons to the two Fe(3+) centers. The binding of 5-methoxy-2-methyl-3-(all-trans-polyprenyl)benzoquinone (DMQn) mediates reduction of the diiron center by nicotinamide adenine dinucleotide (NADH) and initiates oxygen activation for subsequent DMQ hydroxylation. The physiological substrates are 5-methoxy-2-methyl-3-(all-trans-nonaprenyl)benzoquinone (DMQ(9)) and 5-methoxy-2-methyl-3-(all-trans-decaprenyl)benzoquinone (DMQ(10)), however in vitro the enzyme does not have any specificity concerning the length of the polyprenyl tail, and accepts tails of various lengths with similar efficiency (By similarity). Also has a structural role in the COQ enzyme complex, stabilizing other COQ polypeptides. Involved in lifespan determination in a ubiquinone-independent manner (By similarity). Plays a role in modulating mitochondrial stress responses, acting in the nucleus, perhaps via regulating gene expression, independent of its characterized mitochondrial function in ubiquinone biosynthesis (By similarity).</text>
</comment>
<comment type="catalytic activity">
    <reaction evidence="2">
        <text>a 5-methoxy-2-methyl-3-(all-trans-polyprenyl)benzoquinone + NADH + O2 = a 3-demethylubiquinone + NAD(+) + H2O</text>
        <dbReference type="Rhea" id="RHEA:81211"/>
        <dbReference type="Rhea" id="RHEA-COMP:19654"/>
        <dbReference type="Rhea" id="RHEA-COMP:19655"/>
        <dbReference type="ChEBI" id="CHEBI:15377"/>
        <dbReference type="ChEBI" id="CHEBI:15379"/>
        <dbReference type="ChEBI" id="CHEBI:57540"/>
        <dbReference type="ChEBI" id="CHEBI:57945"/>
        <dbReference type="ChEBI" id="CHEBI:231825"/>
        <dbReference type="ChEBI" id="CHEBI:231829"/>
        <dbReference type="EC" id="1.14.13.253"/>
    </reaction>
    <physiologicalReaction direction="left-to-right" evidence="2">
        <dbReference type="Rhea" id="RHEA:81212"/>
    </physiologicalReaction>
</comment>
<comment type="cofactor">
    <cofactor evidence="2">
        <name>Fe cation</name>
        <dbReference type="ChEBI" id="CHEBI:24875"/>
    </cofactor>
    <text evidence="2">Binds 2 iron ions per subunit.</text>
</comment>
<comment type="pathway">
    <text evidence="2">Cofactor biosynthesis; ubiquinone biosynthesis.</text>
</comment>
<comment type="subunit">
    <text evidence="2">Component of a multi-subunit COQ enzyme complex (By similarity). Interacts with COQ8B and COQ6. Interacts with COQ9 (By similarity).</text>
</comment>
<comment type="subcellular location">
    <subcellularLocation>
        <location evidence="2">Mitochondrion inner membrane</location>
        <topology evidence="2">Peripheral membrane protein</topology>
        <orientation evidence="2">Matrix side</orientation>
    </subcellularLocation>
</comment>
<comment type="similarity">
    <text evidence="2">Belongs to the COQ7 family.</text>
</comment>
<proteinExistence type="evidence at transcript level"/>
<reference key="1">
    <citation type="journal article" date="2004" name="Nature">
        <title>Genome sequence of the Brown Norway rat yields insights into mammalian evolution.</title>
        <authorList>
            <person name="Gibbs R.A."/>
            <person name="Weinstock G.M."/>
            <person name="Metzker M.L."/>
            <person name="Muzny D.M."/>
            <person name="Sodergren E.J."/>
            <person name="Scherer S."/>
            <person name="Scott G."/>
            <person name="Steffen D."/>
            <person name="Worley K.C."/>
            <person name="Burch P.E."/>
            <person name="Okwuonu G."/>
            <person name="Hines S."/>
            <person name="Lewis L."/>
            <person name="Deramo C."/>
            <person name="Delgado O."/>
            <person name="Dugan-Rocha S."/>
            <person name="Miner G."/>
            <person name="Morgan M."/>
            <person name="Hawes A."/>
            <person name="Gill R."/>
            <person name="Holt R.A."/>
            <person name="Adams M.D."/>
            <person name="Amanatides P.G."/>
            <person name="Baden-Tillson H."/>
            <person name="Barnstead M."/>
            <person name="Chin S."/>
            <person name="Evans C.A."/>
            <person name="Ferriera S."/>
            <person name="Fosler C."/>
            <person name="Glodek A."/>
            <person name="Gu Z."/>
            <person name="Jennings D."/>
            <person name="Kraft C.L."/>
            <person name="Nguyen T."/>
            <person name="Pfannkoch C.M."/>
            <person name="Sitter C."/>
            <person name="Sutton G.G."/>
            <person name="Venter J.C."/>
            <person name="Woodage T."/>
            <person name="Smith D."/>
            <person name="Lee H.-M."/>
            <person name="Gustafson E."/>
            <person name="Cahill P."/>
            <person name="Kana A."/>
            <person name="Doucette-Stamm L."/>
            <person name="Weinstock K."/>
            <person name="Fechtel K."/>
            <person name="Weiss R.B."/>
            <person name="Dunn D.M."/>
            <person name="Green E.D."/>
            <person name="Blakesley R.W."/>
            <person name="Bouffard G.G."/>
            <person name="De Jong P.J."/>
            <person name="Osoegawa K."/>
            <person name="Zhu B."/>
            <person name="Marra M."/>
            <person name="Schein J."/>
            <person name="Bosdet I."/>
            <person name="Fjell C."/>
            <person name="Jones S."/>
            <person name="Krzywinski M."/>
            <person name="Mathewson C."/>
            <person name="Siddiqui A."/>
            <person name="Wye N."/>
            <person name="McPherson J."/>
            <person name="Zhao S."/>
            <person name="Fraser C.M."/>
            <person name="Shetty J."/>
            <person name="Shatsman S."/>
            <person name="Geer K."/>
            <person name="Chen Y."/>
            <person name="Abramzon S."/>
            <person name="Nierman W.C."/>
            <person name="Havlak P.H."/>
            <person name="Chen R."/>
            <person name="Durbin K.J."/>
            <person name="Egan A."/>
            <person name="Ren Y."/>
            <person name="Song X.-Z."/>
            <person name="Li B."/>
            <person name="Liu Y."/>
            <person name="Qin X."/>
            <person name="Cawley S."/>
            <person name="Cooney A.J."/>
            <person name="D'Souza L.M."/>
            <person name="Martin K."/>
            <person name="Wu J.Q."/>
            <person name="Gonzalez-Garay M.L."/>
            <person name="Jackson A.R."/>
            <person name="Kalafus K.J."/>
            <person name="McLeod M.P."/>
            <person name="Milosavljevic A."/>
            <person name="Virk D."/>
            <person name="Volkov A."/>
            <person name="Wheeler D.A."/>
            <person name="Zhang Z."/>
            <person name="Bailey J.A."/>
            <person name="Eichler E.E."/>
            <person name="Tuzun E."/>
            <person name="Birney E."/>
            <person name="Mongin E."/>
            <person name="Ureta-Vidal A."/>
            <person name="Woodwark C."/>
            <person name="Zdobnov E."/>
            <person name="Bork P."/>
            <person name="Suyama M."/>
            <person name="Torrents D."/>
            <person name="Alexandersson M."/>
            <person name="Trask B.J."/>
            <person name="Young J.M."/>
            <person name="Huang H."/>
            <person name="Wang H."/>
            <person name="Xing H."/>
            <person name="Daniels S."/>
            <person name="Gietzen D."/>
            <person name="Schmidt J."/>
            <person name="Stevens K."/>
            <person name="Vitt U."/>
            <person name="Wingrove J."/>
            <person name="Camara F."/>
            <person name="Mar Alba M."/>
            <person name="Abril J.F."/>
            <person name="Guigo R."/>
            <person name="Smit A."/>
            <person name="Dubchak I."/>
            <person name="Rubin E.M."/>
            <person name="Couronne O."/>
            <person name="Poliakov A."/>
            <person name="Huebner N."/>
            <person name="Ganten D."/>
            <person name="Goesele C."/>
            <person name="Hummel O."/>
            <person name="Kreitler T."/>
            <person name="Lee Y.-A."/>
            <person name="Monti J."/>
            <person name="Schulz H."/>
            <person name="Zimdahl H."/>
            <person name="Himmelbauer H."/>
            <person name="Lehrach H."/>
            <person name="Jacob H.J."/>
            <person name="Bromberg S."/>
            <person name="Gullings-Handley J."/>
            <person name="Jensen-Seaman M.I."/>
            <person name="Kwitek A.E."/>
            <person name="Lazar J."/>
            <person name="Pasko D."/>
            <person name="Tonellato P.J."/>
            <person name="Twigger S."/>
            <person name="Ponting C.P."/>
            <person name="Duarte J.M."/>
            <person name="Rice S."/>
            <person name="Goodstadt L."/>
            <person name="Beatson S.A."/>
            <person name="Emes R.D."/>
            <person name="Winter E.E."/>
            <person name="Webber C."/>
            <person name="Brandt P."/>
            <person name="Nyakatura G."/>
            <person name="Adetobi M."/>
            <person name="Chiaromonte F."/>
            <person name="Elnitski L."/>
            <person name="Eswara P."/>
            <person name="Hardison R.C."/>
            <person name="Hou M."/>
            <person name="Kolbe D."/>
            <person name="Makova K."/>
            <person name="Miller W."/>
            <person name="Nekrutenko A."/>
            <person name="Riemer C."/>
            <person name="Schwartz S."/>
            <person name="Taylor J."/>
            <person name="Yang S."/>
            <person name="Zhang Y."/>
            <person name="Lindpaintner K."/>
            <person name="Andrews T.D."/>
            <person name="Caccamo M."/>
            <person name="Clamp M."/>
            <person name="Clarke L."/>
            <person name="Curwen V."/>
            <person name="Durbin R.M."/>
            <person name="Eyras E."/>
            <person name="Searle S.M."/>
            <person name="Cooper G.M."/>
            <person name="Batzoglou S."/>
            <person name="Brudno M."/>
            <person name="Sidow A."/>
            <person name="Stone E.A."/>
            <person name="Payseur B.A."/>
            <person name="Bourque G."/>
            <person name="Lopez-Otin C."/>
            <person name="Puente X.S."/>
            <person name="Chakrabarti K."/>
            <person name="Chatterji S."/>
            <person name="Dewey C."/>
            <person name="Pachter L."/>
            <person name="Bray N."/>
            <person name="Yap V.B."/>
            <person name="Caspi A."/>
            <person name="Tesler G."/>
            <person name="Pevzner P.A."/>
            <person name="Haussler D."/>
            <person name="Roskin K.M."/>
            <person name="Baertsch R."/>
            <person name="Clawson H."/>
            <person name="Furey T.S."/>
            <person name="Hinrichs A.S."/>
            <person name="Karolchik D."/>
            <person name="Kent W.J."/>
            <person name="Rosenbloom K.R."/>
            <person name="Trumbower H."/>
            <person name="Weirauch M."/>
            <person name="Cooper D.N."/>
            <person name="Stenson P.D."/>
            <person name="Ma B."/>
            <person name="Brent M."/>
            <person name="Arumugam M."/>
            <person name="Shteynberg D."/>
            <person name="Copley R.R."/>
            <person name="Taylor M.S."/>
            <person name="Riethman H."/>
            <person name="Mudunuri U."/>
            <person name="Peterson J."/>
            <person name="Guyer M."/>
            <person name="Felsenfeld A."/>
            <person name="Old S."/>
            <person name="Mockrin S."/>
            <person name="Collins F.S."/>
        </authorList>
    </citation>
    <scope>NUCLEOTIDE SEQUENCE [LARGE SCALE GENOMIC DNA]</scope>
    <source>
        <strain>Brown Norway</strain>
    </source>
</reference>
<reference key="2">
    <citation type="submission" date="2005-09" db="EMBL/GenBank/DDBJ databases">
        <authorList>
            <person name="Mural R.J."/>
            <person name="Adams M.D."/>
            <person name="Myers E.W."/>
            <person name="Smith H.O."/>
            <person name="Venter J.C."/>
        </authorList>
    </citation>
    <scope>NUCLEOTIDE SEQUENCE [LARGE SCALE GENOMIC DNA]</scope>
</reference>
<reference key="3">
    <citation type="journal article" date="1996" name="Arch. Biochem. Biophys.">
        <title>Isolation and sequencing of the rat Coq7 gene and the mapping of mouse Coq7 to chromosome 7.</title>
        <authorList>
            <person name="Jonassen T."/>
            <person name="Marbois B.N."/>
            <person name="Kim L."/>
            <person name="Chin A."/>
            <person name="Xia Y.-R."/>
            <person name="Lusis A.J."/>
            <person name="Clarke C.F."/>
        </authorList>
    </citation>
    <scope>NUCLEOTIDE SEQUENCE [MRNA] OF 39-217</scope>
    <source>
        <strain>Sprague-Dawley</strain>
        <tissue>Testis</tissue>
    </source>
</reference>
<reference key="4">
    <citation type="submission" date="1997-04" db="EMBL/GenBank/DDBJ databases">
        <authorList>
            <person name="Clarke C.F."/>
        </authorList>
    </citation>
    <scope>SEQUENCE REVISION TO 156</scope>
</reference>
<accession>Q63619</accession>
<accession>G3V879</accession>
<accession>O08887</accession>